<evidence type="ECO:0000269" key="1">
    <source>
    </source>
</evidence>
<evidence type="ECO:0000269" key="2">
    <source>
    </source>
</evidence>
<evidence type="ECO:0000269" key="3">
    <source>
    </source>
</evidence>
<evidence type="ECO:0000303" key="4">
    <source>
    </source>
</evidence>
<evidence type="ECO:0000305" key="5"/>
<protein>
    <recommendedName>
        <fullName evidence="4">Quinolone epoxide rearrangement protein asqO</fullName>
        <ecNumber evidence="2">4.2.-.-</ecNumber>
    </recommendedName>
    <alternativeName>
        <fullName evidence="4">4'-methoxyviridicatin/aspoquinolone biosynthesis cluster protein asqO</fullName>
    </alternativeName>
    <alternativeName>
        <fullName evidence="4">Aspoquinolone biosynthesis protein O</fullName>
    </alternativeName>
</protein>
<gene>
    <name evidence="4" type="primary">asqO</name>
    <name type="ORF">AN9228</name>
    <name type="ORF">ANIA_11201</name>
</gene>
<comment type="function">
    <text evidence="1 2 3 5">Quinolone epoxide rearrangement protein; part of the gene cluster that mediates the biosynthesis of the aspoquinolone mycotoxins (PubMed:25251934, PubMed:28114276, PubMed:30026518). Within the pathway, asqO catalyzes an enzymatic 3-exo-tet cyclization to yield the cyclopropyl-THF ring system in aspoquinolone (PubMed:28114276, PubMed:30026518). The first step of the pathway is catalyzed by the nonribosomal peptide synthetase asqK that condenses anthranilic acid and O-methyl-L-tyrosine to produce 4'-methoxycyclopeptin. 4'-methoxycyclopeptin is then converted to 4'-methoxydehydrocyclopeptin by the ketoglutarate-dependent dioxygenase asqJ. AsqJ also converts its first product 4'-methoxydehydrocyclopeptin to 4'-methoxycyclopenin. The following conversion of 4'-methoxycyclopenin into 4'-methoxyviridicatin is catalyzed by the cyclopenase asqI. 4'-methoxyviridicatin is the precursor of quinolone natural products, and is further converted to quinolinone B. The prenyltransferase asqH1 then catalyzes the canonical Friedel-Crafts alkylation of quinolinone B with dimethylallyl cation to yield dimethylallyl quinolone, which is subjected to FAD-dependent dehydrogenation by the FAD-linked oxidoreductase asqF to yield conjugated aryl diene. The delta(3') double bond then serves as the site of the second alkylation with DMAPP catalyzed by the prenyltransferase asqH2 to yield a carbenium ion intermediate, which can be attacked by H(2)O to yield a styrenyl quinolone containing a C3'-hydroxyprenyl chain. The FAD-dependent monooxygenase asqG performs epoxidation of the terminal C7'-C8' olefin. Finally, after dehydratation of the epoxide at C3 by asqC, the quinolone epoxide rearrangement protein asqO catalyzes an enzymatic 3-exo-tet cyclization to yield the cyclopropyl-THF ring system in aspoquinolone (Probable).</text>
</comment>
<comment type="catalytic activity">
    <reaction evidence="2">
        <text>(1'E,3'E)-5-(3,3-dimethyloxiran-2-yl)-3-methylhexa-1,3-dienyl-quinolinone B = aspoquinolone A</text>
        <dbReference type="Rhea" id="RHEA:74511"/>
        <dbReference type="ChEBI" id="CHEBI:177743"/>
        <dbReference type="ChEBI" id="CHEBI:193561"/>
    </reaction>
    <physiologicalReaction direction="left-to-right" evidence="2">
        <dbReference type="Rhea" id="RHEA:74512"/>
    </physiologicalReaction>
</comment>
<comment type="catalytic activity">
    <reaction evidence="2">
        <text>(1'E,3'E)-5-(3,3-dimethyloxiran-2-yl)-3-methylhexa-1,3-dienyl-quinolinone B = aspoquinolone B</text>
        <dbReference type="Rhea" id="RHEA:74515"/>
        <dbReference type="ChEBI" id="CHEBI:193561"/>
        <dbReference type="ChEBI" id="CHEBI:193562"/>
    </reaction>
    <physiologicalReaction direction="left-to-right" evidence="2">
        <dbReference type="Rhea" id="RHEA:74516"/>
    </physiologicalReaction>
</comment>
<comment type="pathway">
    <text evidence="3">Secondary metabolite biosynthesis.</text>
</comment>
<comment type="pathway">
    <text evidence="3">Alkaloid biosynthesis.</text>
</comment>
<comment type="pathway">
    <text evidence="3">Mycotoxin biosynthesis.</text>
</comment>
<comment type="similarity">
    <text evidence="5">Belongs to the quinolone epoxide rearrangement protein penF family.</text>
</comment>
<comment type="sequence caution" evidence="5">
    <conflict type="erroneous gene model prediction">
        <sequence resource="EMBL-CDS" id="CBF82277"/>
    </conflict>
</comment>
<comment type="sequence caution" evidence="2">
    <conflict type="erroneous gene model prediction">
        <sequence resource="EMBL-CDS" id="EAA61519"/>
    </conflict>
    <text>The predicted gene AN9228 has been split into 2 genes: asqI and asqO.</text>
</comment>
<dbReference type="EC" id="4.2.-.-" evidence="2"/>
<dbReference type="EMBL" id="AACD01000170">
    <property type="protein sequence ID" value="EAA61519.1"/>
    <property type="status" value="ALT_SEQ"/>
    <property type="molecule type" value="Genomic_DNA"/>
</dbReference>
<dbReference type="EMBL" id="BN001306">
    <property type="protein sequence ID" value="CBF82277.1"/>
    <property type="status" value="ALT_SEQ"/>
    <property type="molecule type" value="Genomic_DNA"/>
</dbReference>
<dbReference type="RefSeq" id="XP_682497.1">
    <property type="nucleotide sequence ID" value="XM_677405.1"/>
</dbReference>
<dbReference type="SMR" id="P9WEP9"/>
<dbReference type="EnsemblFungi" id="CBF82277">
    <property type="protein sequence ID" value="CBF82277"/>
    <property type="gene ID" value="ANIA_11201"/>
</dbReference>
<dbReference type="VEuPathDB" id="FungiDB:AN11201"/>
<dbReference type="eggNOG" id="ENOG502SMYB">
    <property type="taxonomic scope" value="Eukaryota"/>
</dbReference>
<dbReference type="HOGENOM" id="CLU_051719_1_0_1"/>
<dbReference type="OrthoDB" id="5344254at2759"/>
<dbReference type="BioCyc" id="MetaCyc:MONOMER-124182"/>
<dbReference type="Proteomes" id="UP000000560">
    <property type="component" value="Chromosome VI"/>
</dbReference>
<dbReference type="GO" id="GO:0016829">
    <property type="term" value="F:lyase activity"/>
    <property type="evidence" value="ECO:0007669"/>
    <property type="project" value="UniProtKB-KW"/>
</dbReference>
<dbReference type="GO" id="GO:0046872">
    <property type="term" value="F:metal ion binding"/>
    <property type="evidence" value="ECO:0007669"/>
    <property type="project" value="UniProtKB-KW"/>
</dbReference>
<dbReference type="CDD" id="cd22187">
    <property type="entry name" value="asqI-like"/>
    <property type="match status" value="1"/>
</dbReference>
<dbReference type="Pfam" id="PF24137">
    <property type="entry name" value="DA_N"/>
    <property type="match status" value="1"/>
</dbReference>
<dbReference type="SUPFAM" id="SSF159245">
    <property type="entry name" value="AttH-like"/>
    <property type="match status" value="1"/>
</dbReference>
<keyword id="KW-0186">Copper</keyword>
<keyword id="KW-0456">Lyase</keyword>
<keyword id="KW-0479">Metal-binding</keyword>
<keyword id="KW-1185">Reference proteome</keyword>
<organism>
    <name type="scientific">Emericella nidulans (strain FGSC A4 / ATCC 38163 / CBS 112.46 / NRRL 194 / M139)</name>
    <name type="common">Aspergillus nidulans</name>
    <dbReference type="NCBI Taxonomy" id="227321"/>
    <lineage>
        <taxon>Eukaryota</taxon>
        <taxon>Fungi</taxon>
        <taxon>Dikarya</taxon>
        <taxon>Ascomycota</taxon>
        <taxon>Pezizomycotina</taxon>
        <taxon>Eurotiomycetes</taxon>
        <taxon>Eurotiomycetidae</taxon>
        <taxon>Eurotiales</taxon>
        <taxon>Aspergillaceae</taxon>
        <taxon>Aspergillus</taxon>
        <taxon>Aspergillus subgen. Nidulantes</taxon>
    </lineage>
</organism>
<sequence length="365" mass="39964">MQIVYLFSSVLLTAALAHENGKVAYPFRLFNGTSSVEEISQQDQMDAPKIMPHVNATTFEWWYFDAVSTTSQNESLTVMFENMGPEGLGAPYPGGPLAVQISGSFSNGTAFTIITAATKGAVLEWGGGGVRGEWRGAGSSFAGKDHREYTVSIANPGIGVYGTMTLRSVSPPRYPCDVKERRASEQLIPNMYLANSQPDAIVEVDFNINESTLKFSGIGYHDLSWGSAPLESSVHSWYWGHGRLGRYSLVWFDVMGRDGKEYFSAWITEAGNVILCGCEPDSVLVRPWGENSGFPPGRGTPAPSGYSLRYDLGQNQIFIANFTREVNIIDNDFTKHIIGLFSGGFEGGEQYEGRAMADQFQFGDL</sequence>
<feature type="chain" id="PRO_0000455385" description="Quinolone epoxide rearrangement protein asqO">
    <location>
        <begin position="1"/>
        <end position="365"/>
    </location>
</feature>
<name>ASQO_EMENI</name>
<reference key="1">
    <citation type="journal article" date="2005" name="Nature">
        <title>Sequencing of Aspergillus nidulans and comparative analysis with A. fumigatus and A. oryzae.</title>
        <authorList>
            <person name="Galagan J.E."/>
            <person name="Calvo S.E."/>
            <person name="Cuomo C."/>
            <person name="Ma L.-J."/>
            <person name="Wortman J.R."/>
            <person name="Batzoglou S."/>
            <person name="Lee S.-I."/>
            <person name="Bastuerkmen M."/>
            <person name="Spevak C.C."/>
            <person name="Clutterbuck J."/>
            <person name="Kapitonov V."/>
            <person name="Jurka J."/>
            <person name="Scazzocchio C."/>
            <person name="Farman M.L."/>
            <person name="Butler J."/>
            <person name="Purcell S."/>
            <person name="Harris S."/>
            <person name="Braus G.H."/>
            <person name="Draht O."/>
            <person name="Busch S."/>
            <person name="D'Enfert C."/>
            <person name="Bouchier C."/>
            <person name="Goldman G.H."/>
            <person name="Bell-Pedersen D."/>
            <person name="Griffiths-Jones S."/>
            <person name="Doonan J.H."/>
            <person name="Yu J."/>
            <person name="Vienken K."/>
            <person name="Pain A."/>
            <person name="Freitag M."/>
            <person name="Selker E.U."/>
            <person name="Archer D.B."/>
            <person name="Penalva M.A."/>
            <person name="Oakley B.R."/>
            <person name="Momany M."/>
            <person name="Tanaka T."/>
            <person name="Kumagai T."/>
            <person name="Asai K."/>
            <person name="Machida M."/>
            <person name="Nierman W.C."/>
            <person name="Denning D.W."/>
            <person name="Caddick M.X."/>
            <person name="Hynes M."/>
            <person name="Paoletti M."/>
            <person name="Fischer R."/>
            <person name="Miller B.L."/>
            <person name="Dyer P.S."/>
            <person name="Sachs M.S."/>
            <person name="Osmani S.A."/>
            <person name="Birren B.W."/>
        </authorList>
    </citation>
    <scope>NUCLEOTIDE SEQUENCE [LARGE SCALE GENOMIC DNA]</scope>
    <source>
        <strain>FGSC A4 / ATCC 38163 / CBS 112.46 / NRRL 194 / M139</strain>
    </source>
</reference>
<reference key="2">
    <citation type="journal article" date="2009" name="Fungal Genet. Biol.">
        <title>The 2008 update of the Aspergillus nidulans genome annotation: a community effort.</title>
        <authorList>
            <person name="Wortman J.R."/>
            <person name="Gilsenan J.M."/>
            <person name="Joardar V."/>
            <person name="Deegan J."/>
            <person name="Clutterbuck J."/>
            <person name="Andersen M.R."/>
            <person name="Archer D."/>
            <person name="Bencina M."/>
            <person name="Braus G."/>
            <person name="Coutinho P."/>
            <person name="von Dohren H."/>
            <person name="Doonan J."/>
            <person name="Driessen A.J."/>
            <person name="Durek P."/>
            <person name="Espeso E."/>
            <person name="Fekete E."/>
            <person name="Flipphi M."/>
            <person name="Estrada C.G."/>
            <person name="Geysens S."/>
            <person name="Goldman G."/>
            <person name="de Groot P.W."/>
            <person name="Hansen K."/>
            <person name="Harris S.D."/>
            <person name="Heinekamp T."/>
            <person name="Helmstaedt K."/>
            <person name="Henrissat B."/>
            <person name="Hofmann G."/>
            <person name="Homan T."/>
            <person name="Horio T."/>
            <person name="Horiuchi H."/>
            <person name="James S."/>
            <person name="Jones M."/>
            <person name="Karaffa L."/>
            <person name="Karanyi Z."/>
            <person name="Kato M."/>
            <person name="Keller N."/>
            <person name="Kelly D.E."/>
            <person name="Kiel J.A."/>
            <person name="Kim J.M."/>
            <person name="van der Klei I.J."/>
            <person name="Klis F.M."/>
            <person name="Kovalchuk A."/>
            <person name="Krasevec N."/>
            <person name="Kubicek C.P."/>
            <person name="Liu B."/>
            <person name="Maccabe A."/>
            <person name="Meyer V."/>
            <person name="Mirabito P."/>
            <person name="Miskei M."/>
            <person name="Mos M."/>
            <person name="Mullins J."/>
            <person name="Nelson D.R."/>
            <person name="Nielsen J."/>
            <person name="Oakley B.R."/>
            <person name="Osmani S.A."/>
            <person name="Pakula T."/>
            <person name="Paszewski A."/>
            <person name="Paulsen I."/>
            <person name="Pilsyk S."/>
            <person name="Pocsi I."/>
            <person name="Punt P.J."/>
            <person name="Ram A.F."/>
            <person name="Ren Q."/>
            <person name="Robellet X."/>
            <person name="Robson G."/>
            <person name="Seiboth B."/>
            <person name="van Solingen P."/>
            <person name="Specht T."/>
            <person name="Sun J."/>
            <person name="Taheri-Talesh N."/>
            <person name="Takeshita N."/>
            <person name="Ussery D."/>
            <person name="vanKuyk P.A."/>
            <person name="Visser H."/>
            <person name="van de Vondervoort P.J."/>
            <person name="de Vries R.P."/>
            <person name="Walton J."/>
            <person name="Xiang X."/>
            <person name="Xiong Y."/>
            <person name="Zeng A.P."/>
            <person name="Brandt B.W."/>
            <person name="Cornell M.J."/>
            <person name="van den Hondel C.A."/>
            <person name="Visser J."/>
            <person name="Oliver S.G."/>
            <person name="Turner G."/>
        </authorList>
    </citation>
    <scope>GENOME REANNOTATION</scope>
    <source>
        <strain>FGSC A4 / ATCC 38163 / CBS 112.46 / NRRL 194 / M139</strain>
    </source>
</reference>
<reference key="3">
    <citation type="journal article" date="2014" name="Angew. Chem. Int. Ed.">
        <title>Non-heme dioxygenase catalyzes atypical oxidations of 6,7-bicyclic systems to form the 6,6-quinolone core of viridicatin-type fungal alkaloids.</title>
        <authorList>
            <person name="Ishikawa N."/>
            <person name="Tanaka H."/>
            <person name="Koyama F."/>
            <person name="Noguchi H."/>
            <person name="Wang C.C."/>
            <person name="Hotta K."/>
            <person name="Watanabe K."/>
        </authorList>
    </citation>
    <scope>FUNCTION</scope>
</reference>
<reference key="4">
    <citation type="journal article" date="2017" name="Nat. Chem. Biol.">
        <title>Enzyme-catalyzed cationic epoxide rearrangements in quinolone alkaloid biosynthesis.</title>
        <authorList>
            <person name="Zou Y."/>
            <person name="Garcia-Borras M."/>
            <person name="Tang M.C."/>
            <person name="Hirayama Y."/>
            <person name="Li D.H."/>
            <person name="Li L."/>
            <person name="Watanabe K."/>
            <person name="Houk K.N."/>
            <person name="Tang Y."/>
        </authorList>
    </citation>
    <scope>FUNCTION</scope>
    <scope>CATALYTIC ACTIVITY</scope>
    <scope>PATHWAY</scope>
</reference>
<reference key="5">
    <citation type="journal article" date="2018" name="Nat. Commun.">
        <title>Enzymatic one-step ring contraction for quinolone biosynthesis.</title>
        <authorList>
            <person name="Kishimoto S."/>
            <person name="Hara K."/>
            <person name="Hashimoto H."/>
            <person name="Hirayama Y."/>
            <person name="Champagne P.A."/>
            <person name="Houk K.N."/>
            <person name="Tang Y."/>
            <person name="Watanabe K."/>
        </authorList>
    </citation>
    <scope>FUNCTION</scope>
    <scope>PATHWAY</scope>
</reference>
<proteinExistence type="evidence at protein level"/>
<accession>P9WEP9</accession>
<accession>C8VJQ2</accession>
<accession>Q5AR52</accession>